<protein>
    <recommendedName>
        <fullName evidence="1">ATP phosphoribosyltransferase</fullName>
        <shortName evidence="1">ATP-PRT</shortName>
        <shortName evidence="1">ATP-PRTase</shortName>
        <ecNumber evidence="1">2.4.2.17</ecNumber>
    </recommendedName>
</protein>
<comment type="function">
    <text evidence="1">Catalyzes the condensation of ATP and 5-phosphoribose 1-diphosphate to form N'-(5'-phosphoribosyl)-ATP (PR-ATP). Has a crucial role in the pathway because the rate of histidine biosynthesis seems to be controlled primarily by regulation of HisG enzymatic activity.</text>
</comment>
<comment type="catalytic activity">
    <reaction evidence="1">
        <text>1-(5-phospho-beta-D-ribosyl)-ATP + diphosphate = 5-phospho-alpha-D-ribose 1-diphosphate + ATP</text>
        <dbReference type="Rhea" id="RHEA:18473"/>
        <dbReference type="ChEBI" id="CHEBI:30616"/>
        <dbReference type="ChEBI" id="CHEBI:33019"/>
        <dbReference type="ChEBI" id="CHEBI:58017"/>
        <dbReference type="ChEBI" id="CHEBI:73183"/>
        <dbReference type="EC" id="2.4.2.17"/>
    </reaction>
</comment>
<comment type="pathway">
    <text evidence="1">Amino-acid biosynthesis; L-histidine biosynthesis; L-histidine from 5-phospho-alpha-D-ribose 1-diphosphate: step 1/9.</text>
</comment>
<comment type="subunit">
    <text evidence="1">Heteromultimer composed of HisG and HisZ subunits.</text>
</comment>
<comment type="subcellular location">
    <subcellularLocation>
        <location evidence="1">Cytoplasm</location>
    </subcellularLocation>
</comment>
<comment type="domain">
    <text>Lacks the C-terminal regulatory region which is replaced by HisZ.</text>
</comment>
<comment type="similarity">
    <text evidence="1">Belongs to the ATP phosphoribosyltransferase family. Short subfamily.</text>
</comment>
<organism>
    <name type="scientific">Methylobacillus flagellatus (strain ATCC 51484 / DSM 6875 / VKM B-1610 / KT)</name>
    <dbReference type="NCBI Taxonomy" id="265072"/>
    <lineage>
        <taxon>Bacteria</taxon>
        <taxon>Pseudomonadati</taxon>
        <taxon>Pseudomonadota</taxon>
        <taxon>Betaproteobacteria</taxon>
        <taxon>Nitrosomonadales</taxon>
        <taxon>Methylophilaceae</taxon>
        <taxon>Methylobacillus</taxon>
    </lineage>
</organism>
<name>HIS1_METFK</name>
<accession>Q1H4R9</accession>
<evidence type="ECO:0000255" key="1">
    <source>
        <dbReference type="HAMAP-Rule" id="MF_01018"/>
    </source>
</evidence>
<sequence length="214" mass="23216">MITIALSKGRIFEETTPLLAAAGITALEDPEASRKLILPTNRSDVRLIIVRATDVPTYVQYGAADLGIAGKDVLDEHGGEGLYQPLDLNIARCRMMVAVREDFDYVGSIRRGARLKVVTKYVKTAREHFAAKGMHVDLIKLYGSMELGPLVGLADAIVDLVSTGGTLRANNLKAVEEITDISSRLVVNQASLKLKRDQLQPIMDAFAQAVAANQ</sequence>
<feature type="chain" id="PRO_0000319529" description="ATP phosphoribosyltransferase">
    <location>
        <begin position="1"/>
        <end position="214"/>
    </location>
</feature>
<proteinExistence type="inferred from homology"/>
<gene>
    <name evidence="1" type="primary">hisG</name>
    <name type="ordered locus">Mfla_0247</name>
</gene>
<reference key="1">
    <citation type="submission" date="2006-03" db="EMBL/GenBank/DDBJ databases">
        <title>Complete sequence of Methylobacillus flagellatus KT.</title>
        <authorList>
            <consortium name="US DOE Joint Genome Institute"/>
            <person name="Copeland A."/>
            <person name="Lucas S."/>
            <person name="Lapidus A."/>
            <person name="Barry K."/>
            <person name="Detter J.C."/>
            <person name="Glavina del Rio T."/>
            <person name="Hammon N."/>
            <person name="Israni S."/>
            <person name="Dalin E."/>
            <person name="Tice H."/>
            <person name="Pitluck S."/>
            <person name="Brettin T."/>
            <person name="Bruce D."/>
            <person name="Han C."/>
            <person name="Tapia R."/>
            <person name="Saunders E."/>
            <person name="Gilna P."/>
            <person name="Schmutz J."/>
            <person name="Larimer F."/>
            <person name="Land M."/>
            <person name="Kyrpides N."/>
            <person name="Anderson I."/>
            <person name="Richardson P."/>
        </authorList>
    </citation>
    <scope>NUCLEOTIDE SEQUENCE [LARGE SCALE GENOMIC DNA]</scope>
    <source>
        <strain>ATCC 51484 / DSM 6875 / VKM B-1610 / KT</strain>
    </source>
</reference>
<dbReference type="EC" id="2.4.2.17" evidence="1"/>
<dbReference type="EMBL" id="CP000284">
    <property type="protein sequence ID" value="ABE48518.1"/>
    <property type="molecule type" value="Genomic_DNA"/>
</dbReference>
<dbReference type="RefSeq" id="WP_011478615.1">
    <property type="nucleotide sequence ID" value="NC_007947.1"/>
</dbReference>
<dbReference type="SMR" id="Q1H4R9"/>
<dbReference type="STRING" id="265072.Mfla_0247"/>
<dbReference type="KEGG" id="mfa:Mfla_0247"/>
<dbReference type="eggNOG" id="COG0040">
    <property type="taxonomic scope" value="Bacteria"/>
</dbReference>
<dbReference type="HOGENOM" id="CLU_038115_2_0_4"/>
<dbReference type="OrthoDB" id="9801867at2"/>
<dbReference type="UniPathway" id="UPA00031">
    <property type="reaction ID" value="UER00006"/>
</dbReference>
<dbReference type="Proteomes" id="UP000002440">
    <property type="component" value="Chromosome"/>
</dbReference>
<dbReference type="GO" id="GO:0005737">
    <property type="term" value="C:cytoplasm"/>
    <property type="evidence" value="ECO:0007669"/>
    <property type="project" value="UniProtKB-SubCell"/>
</dbReference>
<dbReference type="GO" id="GO:0005524">
    <property type="term" value="F:ATP binding"/>
    <property type="evidence" value="ECO:0007669"/>
    <property type="project" value="UniProtKB-KW"/>
</dbReference>
<dbReference type="GO" id="GO:0003879">
    <property type="term" value="F:ATP phosphoribosyltransferase activity"/>
    <property type="evidence" value="ECO:0007669"/>
    <property type="project" value="UniProtKB-UniRule"/>
</dbReference>
<dbReference type="GO" id="GO:0000105">
    <property type="term" value="P:L-histidine biosynthetic process"/>
    <property type="evidence" value="ECO:0007669"/>
    <property type="project" value="UniProtKB-UniRule"/>
</dbReference>
<dbReference type="CDD" id="cd13595">
    <property type="entry name" value="PBP2_HisGs"/>
    <property type="match status" value="1"/>
</dbReference>
<dbReference type="FunFam" id="3.40.190.10:FF:000011">
    <property type="entry name" value="ATP phosphoribosyltransferase"/>
    <property type="match status" value="1"/>
</dbReference>
<dbReference type="Gene3D" id="3.40.190.10">
    <property type="entry name" value="Periplasmic binding protein-like II"/>
    <property type="match status" value="2"/>
</dbReference>
<dbReference type="HAMAP" id="MF_01018">
    <property type="entry name" value="HisG_Short"/>
    <property type="match status" value="1"/>
</dbReference>
<dbReference type="InterPro" id="IPR013820">
    <property type="entry name" value="ATP_PRibTrfase_cat"/>
</dbReference>
<dbReference type="InterPro" id="IPR018198">
    <property type="entry name" value="ATP_PRibTrfase_CS"/>
</dbReference>
<dbReference type="InterPro" id="IPR001348">
    <property type="entry name" value="ATP_PRibTrfase_HisG"/>
</dbReference>
<dbReference type="InterPro" id="IPR024893">
    <property type="entry name" value="ATP_PRibTrfase_HisG_short"/>
</dbReference>
<dbReference type="NCBIfam" id="TIGR00070">
    <property type="entry name" value="hisG"/>
    <property type="match status" value="1"/>
</dbReference>
<dbReference type="PANTHER" id="PTHR21403:SF8">
    <property type="entry name" value="ATP PHOSPHORIBOSYLTRANSFERASE"/>
    <property type="match status" value="1"/>
</dbReference>
<dbReference type="PANTHER" id="PTHR21403">
    <property type="entry name" value="ATP PHOSPHORIBOSYLTRANSFERASE ATP-PRTASE"/>
    <property type="match status" value="1"/>
</dbReference>
<dbReference type="Pfam" id="PF01634">
    <property type="entry name" value="HisG"/>
    <property type="match status" value="1"/>
</dbReference>
<dbReference type="SUPFAM" id="SSF53850">
    <property type="entry name" value="Periplasmic binding protein-like II"/>
    <property type="match status" value="1"/>
</dbReference>
<dbReference type="PROSITE" id="PS01316">
    <property type="entry name" value="ATP_P_PHORIBOSYLTR"/>
    <property type="match status" value="1"/>
</dbReference>
<keyword id="KW-0028">Amino-acid biosynthesis</keyword>
<keyword id="KW-0067">ATP-binding</keyword>
<keyword id="KW-0963">Cytoplasm</keyword>
<keyword id="KW-0328">Glycosyltransferase</keyword>
<keyword id="KW-0368">Histidine biosynthesis</keyword>
<keyword id="KW-0547">Nucleotide-binding</keyword>
<keyword id="KW-1185">Reference proteome</keyword>
<keyword id="KW-0808">Transferase</keyword>